<keyword id="KW-1035">Host cytoplasm</keyword>
<keyword id="KW-1045">Host mitochondrion</keyword>
<accession>Q993T1</accession>
<comment type="subunit">
    <text evidence="1">Interacts with NSP2 and NSP5.</text>
</comment>
<comment type="subcellular location">
    <subcellularLocation>
        <location evidence="1">Host cytoplasm</location>
    </subcellularLocation>
    <subcellularLocation>
        <location evidence="1">Host mitochondrion</location>
    </subcellularLocation>
    <text evidence="1">Found in spherical cytoplasmic structures, called viral factories, that appear early after infection and are the site of viral replication and packaging.</text>
</comment>
<comment type="similarity">
    <text evidence="1">Belongs to the rotavirus A NSP6 family.</text>
</comment>
<dbReference type="EMBL" id="AF306494">
    <property type="protein sequence ID" value="AAK15270.1"/>
    <property type="molecule type" value="Genomic_RNA"/>
</dbReference>
<dbReference type="Proteomes" id="UP000006581">
    <property type="component" value="Genome"/>
</dbReference>
<dbReference type="GO" id="GO:0033650">
    <property type="term" value="C:host cell mitochondrion"/>
    <property type="evidence" value="ECO:0007669"/>
    <property type="project" value="UniProtKB-SubCell"/>
</dbReference>
<dbReference type="HAMAP" id="MF_04093">
    <property type="entry name" value="ROTA_NSP6"/>
    <property type="match status" value="1"/>
</dbReference>
<dbReference type="InterPro" id="IPR006950">
    <property type="entry name" value="Rotavirus_NSP6"/>
</dbReference>
<dbReference type="Pfam" id="PF04866">
    <property type="entry name" value="Rota_NS6"/>
    <property type="match status" value="1"/>
</dbReference>
<feature type="chain" id="PRO_0000369525" description="Non-structural protein 6">
    <location>
        <begin position="1"/>
        <end position="92"/>
    </location>
</feature>
<reference key="1">
    <citation type="journal article" date="2001" name="Virus Genes">
        <title>Nucleotide sequence analysis of rotavirus gene 11 from two tissue culture-adapted ATCC strains, RRV and Wa.</title>
        <authorList>
            <person name="Mohan K.V.K."/>
            <person name="Atreya C.D."/>
        </authorList>
    </citation>
    <scope>NUCLEOTIDE SEQUENCE [GENOMIC RNA]</scope>
</reference>
<organism>
    <name type="scientific">Rotavirus A (strain RVA/Human/United States/Wa/1974/G1P1A[8])</name>
    <name type="common">RV-A</name>
    <dbReference type="NCBI Taxonomy" id="10962"/>
    <lineage>
        <taxon>Viruses</taxon>
        <taxon>Riboviria</taxon>
        <taxon>Orthornavirae</taxon>
        <taxon>Duplornaviricota</taxon>
        <taxon>Resentoviricetes</taxon>
        <taxon>Reovirales</taxon>
        <taxon>Sedoreoviridae</taxon>
        <taxon>Rotavirus</taxon>
        <taxon>Rotavirus A</taxon>
    </lineage>
</organism>
<organismHost>
    <name type="scientific">Homo sapiens</name>
    <name type="common">Human</name>
    <dbReference type="NCBI Taxonomy" id="9606"/>
</organismHost>
<evidence type="ECO:0000255" key="1">
    <source>
        <dbReference type="HAMAP-Rule" id="MF_04093"/>
    </source>
</evidence>
<proteinExistence type="inferred from homology"/>
<name>NSP6_ROTHW</name>
<protein>
    <recommendedName>
        <fullName evidence="1">Non-structural protein 6</fullName>
        <shortName evidence="1">NSP6</shortName>
    </recommendedName>
</protein>
<sequence>MNRLLQRQLFLENLLVGTNSMFHQISKHSINTCCRSLQRILDHLILLQTIHSPVFRLDRMQLRQMQMLACLWIHQHNHDLQATLGAIKWISP</sequence>